<keyword id="KW-0012">Acyltransferase</keyword>
<keyword id="KW-0441">Lipid A biosynthesis</keyword>
<keyword id="KW-0444">Lipid biosynthesis</keyword>
<keyword id="KW-0443">Lipid metabolism</keyword>
<keyword id="KW-1185">Reference proteome</keyword>
<keyword id="KW-0677">Repeat</keyword>
<keyword id="KW-0808">Transferase</keyword>
<organism>
    <name type="scientific">Photorhabdus laumondii subsp. laumondii (strain DSM 15139 / CIP 105565 / TT01)</name>
    <name type="common">Photorhabdus luminescens subsp. laumondii</name>
    <dbReference type="NCBI Taxonomy" id="243265"/>
    <lineage>
        <taxon>Bacteria</taxon>
        <taxon>Pseudomonadati</taxon>
        <taxon>Pseudomonadota</taxon>
        <taxon>Gammaproteobacteria</taxon>
        <taxon>Enterobacterales</taxon>
        <taxon>Morganellaceae</taxon>
        <taxon>Photorhabdus</taxon>
    </lineage>
</organism>
<dbReference type="EC" id="2.3.1.191" evidence="1"/>
<dbReference type="EMBL" id="BX571861">
    <property type="protein sequence ID" value="CAE12977.1"/>
    <property type="molecule type" value="Genomic_DNA"/>
</dbReference>
<dbReference type="RefSeq" id="WP_011145058.1">
    <property type="nucleotide sequence ID" value="NC_005126.1"/>
</dbReference>
<dbReference type="SMR" id="Q7N8N7"/>
<dbReference type="STRING" id="243265.plu0682"/>
<dbReference type="GeneID" id="48846971"/>
<dbReference type="KEGG" id="plu:plu0682"/>
<dbReference type="eggNOG" id="COG1044">
    <property type="taxonomic scope" value="Bacteria"/>
</dbReference>
<dbReference type="HOGENOM" id="CLU_049865_0_1_6"/>
<dbReference type="OrthoDB" id="9784739at2"/>
<dbReference type="UniPathway" id="UPA00359">
    <property type="reaction ID" value="UER00479"/>
</dbReference>
<dbReference type="Proteomes" id="UP000002514">
    <property type="component" value="Chromosome"/>
</dbReference>
<dbReference type="GO" id="GO:0016020">
    <property type="term" value="C:membrane"/>
    <property type="evidence" value="ECO:0007669"/>
    <property type="project" value="GOC"/>
</dbReference>
<dbReference type="GO" id="GO:0016410">
    <property type="term" value="F:N-acyltransferase activity"/>
    <property type="evidence" value="ECO:0007669"/>
    <property type="project" value="InterPro"/>
</dbReference>
<dbReference type="GO" id="GO:0103118">
    <property type="term" value="F:UDP-3-O-(R-3-hydroxymyristoyl)-glucosamine N-acyltransferase activity"/>
    <property type="evidence" value="ECO:0007669"/>
    <property type="project" value="UniProtKB-EC"/>
</dbReference>
<dbReference type="GO" id="GO:0009245">
    <property type="term" value="P:lipid A biosynthetic process"/>
    <property type="evidence" value="ECO:0007669"/>
    <property type="project" value="UniProtKB-UniRule"/>
</dbReference>
<dbReference type="CDD" id="cd03352">
    <property type="entry name" value="LbH_LpxD"/>
    <property type="match status" value="1"/>
</dbReference>
<dbReference type="FunFam" id="2.160.10.10:FF:000005">
    <property type="entry name" value="UDP-3-O-(3-hydroxymyristoyl)glucosamine N-acyltransferase"/>
    <property type="match status" value="1"/>
</dbReference>
<dbReference type="Gene3D" id="1.20.5.170">
    <property type="match status" value="1"/>
</dbReference>
<dbReference type="Gene3D" id="2.160.10.10">
    <property type="entry name" value="Hexapeptide repeat proteins"/>
    <property type="match status" value="1"/>
</dbReference>
<dbReference type="Gene3D" id="3.40.1390.10">
    <property type="entry name" value="MurE/MurF, N-terminal domain"/>
    <property type="match status" value="1"/>
</dbReference>
<dbReference type="HAMAP" id="MF_00523">
    <property type="entry name" value="LpxD"/>
    <property type="match status" value="1"/>
</dbReference>
<dbReference type="InterPro" id="IPR001451">
    <property type="entry name" value="Hexapep"/>
</dbReference>
<dbReference type="InterPro" id="IPR018357">
    <property type="entry name" value="Hexapep_transf_CS"/>
</dbReference>
<dbReference type="InterPro" id="IPR007691">
    <property type="entry name" value="LpxD"/>
</dbReference>
<dbReference type="InterPro" id="IPR011004">
    <property type="entry name" value="Trimer_LpxA-like_sf"/>
</dbReference>
<dbReference type="InterPro" id="IPR020573">
    <property type="entry name" value="UDP_GlcNAc_AcTrfase_non-rep"/>
</dbReference>
<dbReference type="NCBIfam" id="TIGR01853">
    <property type="entry name" value="lipid_A_lpxD"/>
    <property type="match status" value="1"/>
</dbReference>
<dbReference type="NCBIfam" id="NF002060">
    <property type="entry name" value="PRK00892.1"/>
    <property type="match status" value="1"/>
</dbReference>
<dbReference type="PANTHER" id="PTHR43378">
    <property type="entry name" value="UDP-3-O-ACYLGLUCOSAMINE N-ACYLTRANSFERASE"/>
    <property type="match status" value="1"/>
</dbReference>
<dbReference type="PANTHER" id="PTHR43378:SF2">
    <property type="entry name" value="UDP-3-O-ACYLGLUCOSAMINE N-ACYLTRANSFERASE 1, MITOCHONDRIAL-RELATED"/>
    <property type="match status" value="1"/>
</dbReference>
<dbReference type="Pfam" id="PF00132">
    <property type="entry name" value="Hexapep"/>
    <property type="match status" value="3"/>
</dbReference>
<dbReference type="Pfam" id="PF04613">
    <property type="entry name" value="LpxD"/>
    <property type="match status" value="1"/>
</dbReference>
<dbReference type="SUPFAM" id="SSF51161">
    <property type="entry name" value="Trimeric LpxA-like enzymes"/>
    <property type="match status" value="1"/>
</dbReference>
<dbReference type="PROSITE" id="PS00101">
    <property type="entry name" value="HEXAPEP_TRANSFERASES"/>
    <property type="match status" value="2"/>
</dbReference>
<protein>
    <recommendedName>
        <fullName evidence="1">UDP-3-O-(3-hydroxymyristoyl)glucosamine N-acyltransferase</fullName>
        <shortName evidence="1">UDP-3-O-(3-OHC14)-GlcN N-acyltransferase</shortName>
        <ecNumber evidence="1">2.3.1.191</ecNumber>
    </recommendedName>
    <alternativeName>
        <fullName evidence="1">UDP-3-O-(3-hydroxytetradecanoyl)glucosamine N-acyltransferase</fullName>
    </alternativeName>
</protein>
<proteinExistence type="inferred from homology"/>
<gene>
    <name evidence="1" type="primary">lpxD</name>
    <name type="ordered locus">plu0682</name>
</gene>
<evidence type="ECO:0000255" key="1">
    <source>
        <dbReference type="HAMAP-Rule" id="MF_00523"/>
    </source>
</evidence>
<comment type="function">
    <text evidence="1">Catalyzes the N-acylation of UDP-3-O-(hydroxytetradecanoyl)glucosamine using 3-hydroxytetradecanoyl-ACP as the acyl donor. Is involved in the biosynthesis of lipid A, a phosphorylated glycolipid that anchors the lipopolysaccharide to the outer membrane of the cell.</text>
</comment>
<comment type="catalytic activity">
    <reaction evidence="1">
        <text>a UDP-3-O-[(3R)-3-hydroxyacyl]-alpha-D-glucosamine + a (3R)-hydroxyacyl-[ACP] = a UDP-2-N,3-O-bis[(3R)-3-hydroxyacyl]-alpha-D-glucosamine + holo-[ACP] + H(+)</text>
        <dbReference type="Rhea" id="RHEA:53836"/>
        <dbReference type="Rhea" id="RHEA-COMP:9685"/>
        <dbReference type="Rhea" id="RHEA-COMP:9945"/>
        <dbReference type="ChEBI" id="CHEBI:15378"/>
        <dbReference type="ChEBI" id="CHEBI:64479"/>
        <dbReference type="ChEBI" id="CHEBI:78827"/>
        <dbReference type="ChEBI" id="CHEBI:137740"/>
        <dbReference type="ChEBI" id="CHEBI:137748"/>
        <dbReference type="EC" id="2.3.1.191"/>
    </reaction>
</comment>
<comment type="catalytic activity">
    <reaction evidence="1">
        <text>UDP-3-O-[(3R)-3-hydroxytetradecanoyl]-alpha-D-glucosamine + (3R)-hydroxytetradecanoyl-[ACP] = UDP-2-N,3-O-bis[(3R)-3-hydroxytetradecanoyl]-alpha-D-glucosamine + holo-[ACP] + H(+)</text>
        <dbReference type="Rhea" id="RHEA:17817"/>
        <dbReference type="Rhea" id="RHEA-COMP:9646"/>
        <dbReference type="Rhea" id="RHEA-COMP:9685"/>
        <dbReference type="ChEBI" id="CHEBI:15378"/>
        <dbReference type="ChEBI" id="CHEBI:64479"/>
        <dbReference type="ChEBI" id="CHEBI:71573"/>
        <dbReference type="ChEBI" id="CHEBI:78474"/>
        <dbReference type="ChEBI" id="CHEBI:78847"/>
    </reaction>
</comment>
<comment type="pathway">
    <text evidence="1">Glycolipid biosynthesis; lipid IV(A) biosynthesis; lipid IV(A) from (3R)-3-hydroxytetradecanoyl-[acyl-carrier-protein] and UDP-N-acetyl-alpha-D-glucosamine: step 3/6.</text>
</comment>
<comment type="subunit">
    <text evidence="1">Homotrimer.</text>
</comment>
<comment type="similarity">
    <text evidence="1">Belongs to the transferase hexapeptide repeat family. LpxD subfamily.</text>
</comment>
<feature type="chain" id="PRO_0000059687" description="UDP-3-O-(3-hydroxymyristoyl)glucosamine N-acyltransferase">
    <location>
        <begin position="1"/>
        <end position="342"/>
    </location>
</feature>
<feature type="active site" description="Proton acceptor" evidence="1">
    <location>
        <position position="239"/>
    </location>
</feature>
<reference key="1">
    <citation type="journal article" date="2003" name="Nat. Biotechnol.">
        <title>The genome sequence of the entomopathogenic bacterium Photorhabdus luminescens.</title>
        <authorList>
            <person name="Duchaud E."/>
            <person name="Rusniok C."/>
            <person name="Frangeul L."/>
            <person name="Buchrieser C."/>
            <person name="Givaudan A."/>
            <person name="Taourit S."/>
            <person name="Bocs S."/>
            <person name="Boursaux-Eude C."/>
            <person name="Chandler M."/>
            <person name="Charles J.-F."/>
            <person name="Dassa E."/>
            <person name="Derose R."/>
            <person name="Derzelle S."/>
            <person name="Freyssinet G."/>
            <person name="Gaudriault S."/>
            <person name="Medigue C."/>
            <person name="Lanois A."/>
            <person name="Powell K."/>
            <person name="Siguier P."/>
            <person name="Vincent R."/>
            <person name="Wingate V."/>
            <person name="Zouine M."/>
            <person name="Glaser P."/>
            <person name="Boemare N."/>
            <person name="Danchin A."/>
            <person name="Kunst F."/>
        </authorList>
    </citation>
    <scope>NUCLEOTIDE SEQUENCE [LARGE SCALE GENOMIC DNA]</scope>
    <source>
        <strain>DSM 15139 / CIP 105565 / TT01</strain>
    </source>
</reference>
<accession>Q7N8N7</accession>
<name>LPXD_PHOLL</name>
<sequence length="342" mass="36090">MSSIRLADLAQQLNAQLHGDGDIVITSIAPMHSANGEQITFLSDSRYRERLGECQAAAVVLQASDLPYCNIPALVVANPYLAYAYMAQIMDTTPIPAQDIHSSAVISPQATLGKNVAVGANAVIESGVVLGDNVVIGAGCFIGKNTRIGAGSRLWANVSVYHNVEMGEQCLIQSGAVIGSDGFGYANDRGKWVKIPQLGSVIIGDRVEIGACTTIDRGALDNTIIGNGVIIDNQCQIAHNVIIGDNTAVAGGVIMAGSLKIGCYCMIGGASVINGHMEICDKVTVTGMSMVMRPITEPGVYSSGIPAQPNKVWRKTAALVMNINEMNKRLKSMESKLEDENE</sequence>